<protein>
    <recommendedName>
        <fullName>Hypoxanthine-guanine phosphoribosyltransferase</fullName>
        <shortName>HGPRT</shortName>
        <shortName>HGPRTase</shortName>
        <ecNumber evidence="3">2.4.2.8</ecNumber>
    </recommendedName>
</protein>
<keyword id="KW-0963">Cytoplasm</keyword>
<keyword id="KW-0328">Glycosyltransferase</keyword>
<keyword id="KW-0460">Magnesium</keyword>
<keyword id="KW-0479">Metal-binding</keyword>
<keyword id="KW-0547">Nucleotide-binding</keyword>
<keyword id="KW-0660">Purine salvage</keyword>
<keyword id="KW-0808">Transferase</keyword>
<reference key="1">
    <citation type="journal article" date="2002" name="Proc. Natl. Acad. Sci. U.S.A.">
        <title>Genome sequence of a serotype M3 strain of group A Streptococcus: phage-encoded toxins, the high-virulence phenotype, and clone emergence.</title>
        <authorList>
            <person name="Beres S.B."/>
            <person name="Sylva G.L."/>
            <person name="Barbian K.D."/>
            <person name="Lei B."/>
            <person name="Hoff J.S."/>
            <person name="Mammarella N.D."/>
            <person name="Liu M.-Y."/>
            <person name="Smoot J.C."/>
            <person name="Porcella S.F."/>
            <person name="Parkins L.D."/>
            <person name="Campbell D.S."/>
            <person name="Smith T.M."/>
            <person name="McCormick J.K."/>
            <person name="Leung D.Y.M."/>
            <person name="Schlievert P.M."/>
            <person name="Musser J.M."/>
        </authorList>
    </citation>
    <scope>NUCLEOTIDE SEQUENCE [LARGE SCALE GENOMIC DNA]</scope>
    <source>
        <strain>ATCC BAA-595 / MGAS315</strain>
    </source>
</reference>
<proteinExistence type="inferred from homology"/>
<gene>
    <name type="primary">hpt</name>
    <name type="ordered locus">SpyM3_0011</name>
</gene>
<organism>
    <name type="scientific">Streptococcus pyogenes serotype M3 (strain ATCC BAA-595 / MGAS315)</name>
    <dbReference type="NCBI Taxonomy" id="198466"/>
    <lineage>
        <taxon>Bacteria</taxon>
        <taxon>Bacillati</taxon>
        <taxon>Bacillota</taxon>
        <taxon>Bacilli</taxon>
        <taxon>Lactobacillales</taxon>
        <taxon>Streptococcaceae</taxon>
        <taxon>Streptococcus</taxon>
    </lineage>
</organism>
<accession>P0DD40</accession>
<accession>Q7CFM0</accession>
<accession>Q8P321</accession>
<dbReference type="EC" id="2.4.2.8" evidence="3"/>
<dbReference type="EMBL" id="AE014074">
    <property type="protein sequence ID" value="AAM78618.1"/>
    <property type="molecule type" value="Genomic_DNA"/>
</dbReference>
<dbReference type="RefSeq" id="WP_002981912.1">
    <property type="nucleotide sequence ID" value="NC_004070.1"/>
</dbReference>
<dbReference type="SMR" id="P0DD40"/>
<dbReference type="GeneID" id="69899963"/>
<dbReference type="KEGG" id="spg:SpyM3_0011"/>
<dbReference type="HOGENOM" id="CLU_073615_0_0_9"/>
<dbReference type="UniPathway" id="UPA00591">
    <property type="reaction ID" value="UER00648"/>
</dbReference>
<dbReference type="UniPathway" id="UPA00909">
    <property type="reaction ID" value="UER00887"/>
</dbReference>
<dbReference type="Proteomes" id="UP000000564">
    <property type="component" value="Chromosome"/>
</dbReference>
<dbReference type="GO" id="GO:0005829">
    <property type="term" value="C:cytosol"/>
    <property type="evidence" value="ECO:0007669"/>
    <property type="project" value="TreeGrafter"/>
</dbReference>
<dbReference type="GO" id="GO:0052657">
    <property type="term" value="F:guanine phosphoribosyltransferase activity"/>
    <property type="evidence" value="ECO:0007669"/>
    <property type="project" value="RHEA"/>
</dbReference>
<dbReference type="GO" id="GO:0004422">
    <property type="term" value="F:hypoxanthine phosphoribosyltransferase activity"/>
    <property type="evidence" value="ECO:0007669"/>
    <property type="project" value="InterPro"/>
</dbReference>
<dbReference type="GO" id="GO:0000287">
    <property type="term" value="F:magnesium ion binding"/>
    <property type="evidence" value="ECO:0007669"/>
    <property type="project" value="TreeGrafter"/>
</dbReference>
<dbReference type="GO" id="GO:0000166">
    <property type="term" value="F:nucleotide binding"/>
    <property type="evidence" value="ECO:0007669"/>
    <property type="project" value="UniProtKB-KW"/>
</dbReference>
<dbReference type="GO" id="GO:0032263">
    <property type="term" value="P:GMP salvage"/>
    <property type="evidence" value="ECO:0007669"/>
    <property type="project" value="UniProtKB-UniPathway"/>
</dbReference>
<dbReference type="GO" id="GO:0006178">
    <property type="term" value="P:guanine salvage"/>
    <property type="evidence" value="ECO:0007669"/>
    <property type="project" value="TreeGrafter"/>
</dbReference>
<dbReference type="GO" id="GO:0046100">
    <property type="term" value="P:hypoxanthine metabolic process"/>
    <property type="evidence" value="ECO:0007669"/>
    <property type="project" value="TreeGrafter"/>
</dbReference>
<dbReference type="GO" id="GO:0032264">
    <property type="term" value="P:IMP salvage"/>
    <property type="evidence" value="ECO:0007669"/>
    <property type="project" value="UniProtKB-UniPathway"/>
</dbReference>
<dbReference type="GO" id="GO:0006166">
    <property type="term" value="P:purine ribonucleoside salvage"/>
    <property type="evidence" value="ECO:0007669"/>
    <property type="project" value="UniProtKB-KW"/>
</dbReference>
<dbReference type="CDD" id="cd06223">
    <property type="entry name" value="PRTases_typeI"/>
    <property type="match status" value="1"/>
</dbReference>
<dbReference type="FunFam" id="3.40.50.2020:FF:000006">
    <property type="entry name" value="Hypoxanthine phosphoribosyltransferase"/>
    <property type="match status" value="1"/>
</dbReference>
<dbReference type="Gene3D" id="3.40.50.2020">
    <property type="match status" value="1"/>
</dbReference>
<dbReference type="InterPro" id="IPR050408">
    <property type="entry name" value="HGPRT"/>
</dbReference>
<dbReference type="InterPro" id="IPR005904">
    <property type="entry name" value="Hxn_phspho_trans"/>
</dbReference>
<dbReference type="InterPro" id="IPR000836">
    <property type="entry name" value="PRibTrfase_dom"/>
</dbReference>
<dbReference type="InterPro" id="IPR029057">
    <property type="entry name" value="PRTase-like"/>
</dbReference>
<dbReference type="NCBIfam" id="TIGR01203">
    <property type="entry name" value="HGPRTase"/>
    <property type="match status" value="1"/>
</dbReference>
<dbReference type="PANTHER" id="PTHR43340:SF1">
    <property type="entry name" value="HYPOXANTHINE PHOSPHORIBOSYLTRANSFERASE"/>
    <property type="match status" value="1"/>
</dbReference>
<dbReference type="PANTHER" id="PTHR43340">
    <property type="entry name" value="HYPOXANTHINE-GUANINE PHOSPHORIBOSYLTRANSFERASE"/>
    <property type="match status" value="1"/>
</dbReference>
<dbReference type="Pfam" id="PF00156">
    <property type="entry name" value="Pribosyltran"/>
    <property type="match status" value="1"/>
</dbReference>
<dbReference type="SUPFAM" id="SSF53271">
    <property type="entry name" value="PRTase-like"/>
    <property type="match status" value="1"/>
</dbReference>
<dbReference type="PROSITE" id="PS00103">
    <property type="entry name" value="PUR_PYR_PR_TRANSFER"/>
    <property type="match status" value="1"/>
</dbReference>
<comment type="function">
    <text evidence="3">Purine salvage pathway enzyme that catalyzes the transfer of the ribosyl-5-phosphate group from 5-phospho-alpha-D-ribose 1-diphosphate (PRPP) to the N9 position of the 6-oxopurines hypoxanthine and guanine to form the corresponding ribonucleotides IMP (inosine 5'-monophosphate) and GMP (guanosine 5'-monophosphate), with the release of PPi.</text>
</comment>
<comment type="catalytic activity">
    <reaction evidence="3">
        <text>IMP + diphosphate = hypoxanthine + 5-phospho-alpha-D-ribose 1-diphosphate</text>
        <dbReference type="Rhea" id="RHEA:17973"/>
        <dbReference type="ChEBI" id="CHEBI:17368"/>
        <dbReference type="ChEBI" id="CHEBI:33019"/>
        <dbReference type="ChEBI" id="CHEBI:58017"/>
        <dbReference type="ChEBI" id="CHEBI:58053"/>
        <dbReference type="EC" id="2.4.2.8"/>
    </reaction>
    <physiologicalReaction direction="right-to-left" evidence="3">
        <dbReference type="Rhea" id="RHEA:17975"/>
    </physiologicalReaction>
</comment>
<comment type="catalytic activity">
    <reaction evidence="3">
        <text>GMP + diphosphate = guanine + 5-phospho-alpha-D-ribose 1-diphosphate</text>
        <dbReference type="Rhea" id="RHEA:25424"/>
        <dbReference type="ChEBI" id="CHEBI:16235"/>
        <dbReference type="ChEBI" id="CHEBI:33019"/>
        <dbReference type="ChEBI" id="CHEBI:58017"/>
        <dbReference type="ChEBI" id="CHEBI:58115"/>
        <dbReference type="EC" id="2.4.2.8"/>
    </reaction>
    <physiologicalReaction direction="right-to-left" evidence="3">
        <dbReference type="Rhea" id="RHEA:25426"/>
    </physiologicalReaction>
</comment>
<comment type="cofactor">
    <cofactor evidence="3">
        <name>Mg(2+)</name>
        <dbReference type="ChEBI" id="CHEBI:18420"/>
    </cofactor>
</comment>
<comment type="pathway">
    <text evidence="3">Purine metabolism; IMP biosynthesis via salvage pathway; IMP from hypoxanthine: step 1/1.</text>
</comment>
<comment type="pathway">
    <text evidence="3">Purine metabolism; GMP biosynthesis via salvage pathway; GMP from guanine: step 1/1.</text>
</comment>
<comment type="subcellular location">
    <subcellularLocation>
        <location evidence="1">Cytoplasm</location>
    </subcellularLocation>
</comment>
<comment type="similarity">
    <text evidence="4">Belongs to the purine/pyrimidine phosphoribosyltransferase family.</text>
</comment>
<name>HGPRT_STRP3</name>
<sequence length="180" mass="20725">MLEQDIQKILYSENDIIRKTKKLGEQLTKDYQEKNPLMIGVLKGSVPFMAELMKHIDTHVEIDFMVVSSYHGGTSSSGEVKILKDVDTNIEGRDIIIVEDIIDTGRTLKYLRDMFKYRKANTIKIATLFDKPEGRVVKIEADYVCYNIPNEFIVGFGLDYAENYRNLPYVGVLKEEVYSK</sequence>
<evidence type="ECO:0000250" key="1"/>
<evidence type="ECO:0000250" key="2">
    <source>
        <dbReference type="UniProtKB" id="P0A9M2"/>
    </source>
</evidence>
<evidence type="ECO:0000250" key="3">
    <source>
        <dbReference type="UniProtKB" id="P9WHQ9"/>
    </source>
</evidence>
<evidence type="ECO:0000305" key="4"/>
<feature type="chain" id="PRO_0000139626" description="Hypoxanthine-guanine phosphoribosyltransferase">
    <location>
        <begin position="1"/>
        <end position="180"/>
    </location>
</feature>
<feature type="active site" description="Proton acceptor" evidence="2">
    <location>
        <position position="103"/>
    </location>
</feature>
<feature type="binding site" evidence="3">
    <location>
        <position position="43"/>
    </location>
    <ligand>
        <name>diphosphate</name>
        <dbReference type="ChEBI" id="CHEBI:33019"/>
    </ligand>
</feature>
<feature type="binding site" evidence="3">
    <location>
        <position position="44"/>
    </location>
    <ligand>
        <name>diphosphate</name>
        <dbReference type="ChEBI" id="CHEBI:33019"/>
    </ligand>
</feature>
<feature type="binding site" evidence="3">
    <location>
        <position position="99"/>
    </location>
    <ligand>
        <name>Mg(2+)</name>
        <dbReference type="ChEBI" id="CHEBI:18420"/>
    </ligand>
</feature>
<feature type="binding site" evidence="3">
    <location>
        <position position="100"/>
    </location>
    <ligand>
        <name>Mg(2+)</name>
        <dbReference type="ChEBI" id="CHEBI:18420"/>
    </ligand>
</feature>
<feature type="binding site" evidence="3">
    <location>
        <position position="131"/>
    </location>
    <ligand>
        <name>GMP</name>
        <dbReference type="ChEBI" id="CHEBI:58115"/>
    </ligand>
</feature>
<feature type="binding site" evidence="3">
    <location>
        <begin position="152"/>
        <end position="153"/>
    </location>
    <ligand>
        <name>GMP</name>
        <dbReference type="ChEBI" id="CHEBI:58115"/>
    </ligand>
</feature>
<feature type="binding site" evidence="3">
    <location>
        <position position="159"/>
    </location>
    <ligand>
        <name>GMP</name>
        <dbReference type="ChEBI" id="CHEBI:58115"/>
    </ligand>
</feature>
<feature type="binding site" evidence="3">
    <location>
        <position position="165"/>
    </location>
    <ligand>
        <name>diphosphate</name>
        <dbReference type="ChEBI" id="CHEBI:33019"/>
    </ligand>
</feature>